<comment type="function">
    <text evidence="1">Catalyzes the intermembrane transfer of phosphatidylglycerol and phosphatidylinositol.</text>
</comment>
<comment type="subunit">
    <text evidence="1">Monomer.</text>
</comment>
<comment type="similarity">
    <text evidence="3">Belongs to the NPC2 family.</text>
</comment>
<sequence>MKHSKNQIVYITFFIIILIVVKPIESVEWNDCSDPNDSFKIEKLEFSPEQPIAGQDLIISISGYLNKEITNGEAYLSITFDRIPIIKLKGNLCNGMGVTCPIQQGNYSTTTINQEIPENAPQGYYYVNFVLYDQDDLQITCIDVQMNITQS</sequence>
<keyword id="KW-0445">Lipid transport</keyword>
<keyword id="KW-1185">Reference proteome</keyword>
<keyword id="KW-0732">Signal</keyword>
<keyword id="KW-0813">Transport</keyword>
<feature type="signal peptide" evidence="2">
    <location>
        <begin position="1"/>
        <end position="26"/>
    </location>
</feature>
<feature type="chain" id="PRO_0000365589" description="Putative phosphatidylglycerol/phosphatidylinositol transfer protein 1">
    <location>
        <begin position="27"/>
        <end position="151"/>
    </location>
</feature>
<organism>
    <name type="scientific">Dictyostelium discoideum</name>
    <name type="common">Social amoeba</name>
    <dbReference type="NCBI Taxonomy" id="44689"/>
    <lineage>
        <taxon>Eukaryota</taxon>
        <taxon>Amoebozoa</taxon>
        <taxon>Evosea</taxon>
        <taxon>Eumycetozoa</taxon>
        <taxon>Dictyostelia</taxon>
        <taxon>Dictyosteliales</taxon>
        <taxon>Dictyosteliaceae</taxon>
        <taxon>Dictyostelium</taxon>
    </lineage>
</organism>
<proteinExistence type="inferred from homology"/>
<accession>Q55BL4</accession>
<reference key="1">
    <citation type="journal article" date="2005" name="Nature">
        <title>The genome of the social amoeba Dictyostelium discoideum.</title>
        <authorList>
            <person name="Eichinger L."/>
            <person name="Pachebat J.A."/>
            <person name="Gloeckner G."/>
            <person name="Rajandream M.A."/>
            <person name="Sucgang R."/>
            <person name="Berriman M."/>
            <person name="Song J."/>
            <person name="Olsen R."/>
            <person name="Szafranski K."/>
            <person name="Xu Q."/>
            <person name="Tunggal B."/>
            <person name="Kummerfeld S."/>
            <person name="Madera M."/>
            <person name="Konfortov B.A."/>
            <person name="Rivero F."/>
            <person name="Bankier A.T."/>
            <person name="Lehmann R."/>
            <person name="Hamlin N."/>
            <person name="Davies R."/>
            <person name="Gaudet P."/>
            <person name="Fey P."/>
            <person name="Pilcher K."/>
            <person name="Chen G."/>
            <person name="Saunders D."/>
            <person name="Sodergren E.J."/>
            <person name="Davis P."/>
            <person name="Kerhornou A."/>
            <person name="Nie X."/>
            <person name="Hall N."/>
            <person name="Anjard C."/>
            <person name="Hemphill L."/>
            <person name="Bason N."/>
            <person name="Farbrother P."/>
            <person name="Desany B."/>
            <person name="Just E."/>
            <person name="Morio T."/>
            <person name="Rost R."/>
            <person name="Churcher C.M."/>
            <person name="Cooper J."/>
            <person name="Haydock S."/>
            <person name="van Driessche N."/>
            <person name="Cronin A."/>
            <person name="Goodhead I."/>
            <person name="Muzny D.M."/>
            <person name="Mourier T."/>
            <person name="Pain A."/>
            <person name="Lu M."/>
            <person name="Harper D."/>
            <person name="Lindsay R."/>
            <person name="Hauser H."/>
            <person name="James K.D."/>
            <person name="Quiles M."/>
            <person name="Madan Babu M."/>
            <person name="Saito T."/>
            <person name="Buchrieser C."/>
            <person name="Wardroper A."/>
            <person name="Felder M."/>
            <person name="Thangavelu M."/>
            <person name="Johnson D."/>
            <person name="Knights A."/>
            <person name="Loulseged H."/>
            <person name="Mungall K.L."/>
            <person name="Oliver K."/>
            <person name="Price C."/>
            <person name="Quail M.A."/>
            <person name="Urushihara H."/>
            <person name="Hernandez J."/>
            <person name="Rabbinowitsch E."/>
            <person name="Steffen D."/>
            <person name="Sanders M."/>
            <person name="Ma J."/>
            <person name="Kohara Y."/>
            <person name="Sharp S."/>
            <person name="Simmonds M.N."/>
            <person name="Spiegler S."/>
            <person name="Tivey A."/>
            <person name="Sugano S."/>
            <person name="White B."/>
            <person name="Walker D."/>
            <person name="Woodward J.R."/>
            <person name="Winckler T."/>
            <person name="Tanaka Y."/>
            <person name="Shaulsky G."/>
            <person name="Schleicher M."/>
            <person name="Weinstock G.M."/>
            <person name="Rosenthal A."/>
            <person name="Cox E.C."/>
            <person name="Chisholm R.L."/>
            <person name="Gibbs R.A."/>
            <person name="Loomis W.F."/>
            <person name="Platzer M."/>
            <person name="Kay R.R."/>
            <person name="Williams J.G."/>
            <person name="Dear P.H."/>
            <person name="Noegel A.A."/>
            <person name="Barrell B.G."/>
            <person name="Kuspa A."/>
        </authorList>
    </citation>
    <scope>NUCLEOTIDE SEQUENCE [LARGE SCALE GENOMIC DNA]</scope>
    <source>
        <strain>AX4</strain>
    </source>
</reference>
<name>NPC21_DICDI</name>
<gene>
    <name type="ORF">DDB_G0270454</name>
</gene>
<evidence type="ECO:0000250" key="1"/>
<evidence type="ECO:0000255" key="2"/>
<evidence type="ECO:0000305" key="3"/>
<protein>
    <recommendedName>
        <fullName>Putative phosphatidylglycerol/phosphatidylinositol transfer protein 1</fullName>
        <shortName>PG/PI-TP</shortName>
    </recommendedName>
</protein>
<dbReference type="EMBL" id="AAFI02000005">
    <property type="protein sequence ID" value="EAL72577.1"/>
    <property type="molecule type" value="Genomic_DNA"/>
</dbReference>
<dbReference type="RefSeq" id="XP_646816.1">
    <property type="nucleotide sequence ID" value="XM_641724.1"/>
</dbReference>
<dbReference type="SMR" id="Q55BL4"/>
<dbReference type="FunCoup" id="Q55BL4">
    <property type="interactions" value="2"/>
</dbReference>
<dbReference type="PaxDb" id="44689-DDB0191075"/>
<dbReference type="EnsemblProtists" id="EAL72577">
    <property type="protein sequence ID" value="EAL72577"/>
    <property type="gene ID" value="DDB_G0270454"/>
</dbReference>
<dbReference type="GeneID" id="8617788"/>
<dbReference type="KEGG" id="ddi:DDB_G0270454"/>
<dbReference type="dictyBase" id="DDB_G0270454"/>
<dbReference type="VEuPathDB" id="AmoebaDB:DDB_G0270454"/>
<dbReference type="HOGENOM" id="CLU_097982_2_1_1"/>
<dbReference type="InParanoid" id="Q55BL4"/>
<dbReference type="OMA" id="LQITCID"/>
<dbReference type="PhylomeDB" id="Q55BL4"/>
<dbReference type="Reactome" id="R-DDI-6798695">
    <property type="pathway name" value="Neutrophil degranulation"/>
</dbReference>
<dbReference type="Reactome" id="R-DDI-8964038">
    <property type="pathway name" value="LDL clearance"/>
</dbReference>
<dbReference type="PRO" id="PR:Q55BL4"/>
<dbReference type="Proteomes" id="UP000002195">
    <property type="component" value="Chromosome 1"/>
</dbReference>
<dbReference type="GO" id="GO:0032934">
    <property type="term" value="F:sterol binding"/>
    <property type="evidence" value="ECO:0000318"/>
    <property type="project" value="GO_Central"/>
</dbReference>
<dbReference type="GO" id="GO:0015918">
    <property type="term" value="P:sterol transport"/>
    <property type="evidence" value="ECO:0000318"/>
    <property type="project" value="GO_Central"/>
</dbReference>
<dbReference type="Gene3D" id="2.70.220.10">
    <property type="entry name" value="Ganglioside GM2 activator"/>
    <property type="match status" value="2"/>
</dbReference>
<dbReference type="InterPro" id="IPR036846">
    <property type="entry name" value="GM2-AP_sf"/>
</dbReference>
<dbReference type="InterPro" id="IPR014756">
    <property type="entry name" value="Ig_E-set"/>
</dbReference>
<dbReference type="InterPro" id="IPR003172">
    <property type="entry name" value="ML_dom"/>
</dbReference>
<dbReference type="InterPro" id="IPR039670">
    <property type="entry name" value="NPC2-like"/>
</dbReference>
<dbReference type="PANTHER" id="PTHR11306:SF60">
    <property type="entry name" value="COUNTIN-3-RELATED"/>
    <property type="match status" value="1"/>
</dbReference>
<dbReference type="PANTHER" id="PTHR11306">
    <property type="entry name" value="NIEMANN PICK TYPE C2 PROTEIN NPC2-RELATED"/>
    <property type="match status" value="1"/>
</dbReference>
<dbReference type="Pfam" id="PF02221">
    <property type="entry name" value="E1_DerP2_DerF2"/>
    <property type="match status" value="1"/>
</dbReference>
<dbReference type="SMART" id="SM00737">
    <property type="entry name" value="ML"/>
    <property type="match status" value="1"/>
</dbReference>
<dbReference type="SUPFAM" id="SSF81296">
    <property type="entry name" value="E set domains"/>
    <property type="match status" value="1"/>
</dbReference>